<protein>
    <recommendedName>
        <fullName evidence="1">Photosystem II reaction center protein T</fullName>
        <shortName evidence="1">PSII-T</shortName>
    </recommendedName>
</protein>
<gene>
    <name evidence="1" type="primary">psbT</name>
</gene>
<proteinExistence type="inferred from homology"/>
<accession>A0T0B1</accession>
<keyword id="KW-0150">Chloroplast</keyword>
<keyword id="KW-0472">Membrane</keyword>
<keyword id="KW-0602">Photosynthesis</keyword>
<keyword id="KW-0604">Photosystem II</keyword>
<keyword id="KW-0934">Plastid</keyword>
<keyword id="KW-1185">Reference proteome</keyword>
<keyword id="KW-0793">Thylakoid</keyword>
<keyword id="KW-0812">Transmembrane</keyword>
<keyword id="KW-1133">Transmembrane helix</keyword>
<organism>
    <name type="scientific">Phaeodactylum tricornutum (strain CCAP 1055/1)</name>
    <dbReference type="NCBI Taxonomy" id="556484"/>
    <lineage>
        <taxon>Eukaryota</taxon>
        <taxon>Sar</taxon>
        <taxon>Stramenopiles</taxon>
        <taxon>Ochrophyta</taxon>
        <taxon>Bacillariophyta</taxon>
        <taxon>Bacillariophyceae</taxon>
        <taxon>Bacillariophycidae</taxon>
        <taxon>Naviculales</taxon>
        <taxon>Phaeodactylaceae</taxon>
        <taxon>Phaeodactylum</taxon>
    </lineage>
</organism>
<evidence type="ECO:0000255" key="1">
    <source>
        <dbReference type="HAMAP-Rule" id="MF_00808"/>
    </source>
</evidence>
<reference key="1">
    <citation type="journal article" date="2007" name="Mol. Genet. Genomics">
        <title>Chloroplast genomes of the diatoms Phaeodactylum tricornutum and Thalassiosira pseudonana: comparison with other plastid genomes of the red lineage.</title>
        <authorList>
            <person name="Oudot-Le Secq M.-P."/>
            <person name="Grimwood J."/>
            <person name="Shapiro H."/>
            <person name="Armbrust E.V."/>
            <person name="Bowler C."/>
            <person name="Green B.R."/>
        </authorList>
    </citation>
    <scope>NUCLEOTIDE SEQUENCE [LARGE SCALE GENOMIC DNA]</scope>
    <source>
        <strain>CCAP 1055/1</strain>
    </source>
</reference>
<sequence length="32" mass="3791">MEALVYTFLLIGTLIVIFFAVFFRETPRIIKK</sequence>
<name>PSBT_PHATC</name>
<geneLocation type="chloroplast"/>
<dbReference type="EMBL" id="EF067920">
    <property type="protein sequence ID" value="ABK20609.1"/>
    <property type="molecule type" value="Genomic_DNA"/>
</dbReference>
<dbReference type="RefSeq" id="YP_874386.1">
    <property type="nucleotide sequence ID" value="NC_008588.1"/>
</dbReference>
<dbReference type="SMR" id="A0T0B1"/>
<dbReference type="STRING" id="556484.A0T0B1"/>
<dbReference type="GeneID" id="4524671"/>
<dbReference type="InParanoid" id="A0T0B1"/>
<dbReference type="Proteomes" id="UP000000759">
    <property type="component" value="Chloroplast"/>
</dbReference>
<dbReference type="GO" id="GO:0009535">
    <property type="term" value="C:chloroplast thylakoid membrane"/>
    <property type="evidence" value="ECO:0007669"/>
    <property type="project" value="UniProtKB-SubCell"/>
</dbReference>
<dbReference type="GO" id="GO:0009539">
    <property type="term" value="C:photosystem II reaction center"/>
    <property type="evidence" value="ECO:0007669"/>
    <property type="project" value="InterPro"/>
</dbReference>
<dbReference type="GO" id="GO:0015979">
    <property type="term" value="P:photosynthesis"/>
    <property type="evidence" value="ECO:0007669"/>
    <property type="project" value="UniProtKB-UniRule"/>
</dbReference>
<dbReference type="HAMAP" id="MF_00808">
    <property type="entry name" value="PSII_PsbT"/>
    <property type="match status" value="1"/>
</dbReference>
<dbReference type="InterPro" id="IPR001743">
    <property type="entry name" value="PSII_PsbT"/>
</dbReference>
<dbReference type="InterPro" id="IPR037268">
    <property type="entry name" value="PSII_PsbT_sf"/>
</dbReference>
<dbReference type="PANTHER" id="PTHR36411">
    <property type="match status" value="1"/>
</dbReference>
<dbReference type="PANTHER" id="PTHR36411:SF2">
    <property type="entry name" value="PHOTOSYSTEM II REACTION CENTER PROTEIN T"/>
    <property type="match status" value="1"/>
</dbReference>
<dbReference type="Pfam" id="PF01405">
    <property type="entry name" value="PsbT"/>
    <property type="match status" value="1"/>
</dbReference>
<dbReference type="SUPFAM" id="SSF161029">
    <property type="entry name" value="Photosystem II reaction center protein T, PsbT"/>
    <property type="match status" value="1"/>
</dbReference>
<feature type="chain" id="PRO_0000276322" description="Photosystem II reaction center protein T">
    <location>
        <begin position="1"/>
        <end position="32"/>
    </location>
</feature>
<feature type="transmembrane region" description="Helical" evidence="1">
    <location>
        <begin position="3"/>
        <end position="23"/>
    </location>
</feature>
<comment type="function">
    <text evidence="1">Found at the monomer-monomer interface of the photosystem II (PS II) dimer, plays a role in assembly and dimerization of PSII. PSII is a light-driven water plastoquinone oxidoreductase, using light energy to abstract electrons from H(2)O, generating a proton gradient subsequently used for ATP formation.</text>
</comment>
<comment type="subunit">
    <text evidence="1">PSII is composed of 1 copy each of membrane proteins PsbA, PsbB, PsbC, PsbD, PsbE, PsbF, PsbH, PsbI, PsbJ, PsbK, PsbL, PsbM, PsbT, PsbX, PsbY, PsbZ, Psb30/Ycf12, at least 3 peripheral proteins of the oxygen-evolving complex and a large number of cofactors. It forms dimeric complexes.</text>
</comment>
<comment type="subcellular location">
    <subcellularLocation>
        <location evidence="1">Plastid</location>
        <location evidence="1">Chloroplast thylakoid membrane</location>
        <topology evidence="1">Single-pass membrane protein</topology>
    </subcellularLocation>
</comment>
<comment type="similarity">
    <text evidence="1">Belongs to the PsbT family.</text>
</comment>